<dbReference type="EMBL" id="AF029980">
    <property type="protein sequence ID" value="AAD01897.1"/>
    <property type="molecule type" value="mRNA"/>
</dbReference>
<dbReference type="EMBL" id="AF029981">
    <property type="protein sequence ID" value="AAD01898.1"/>
    <property type="molecule type" value="Genomic_DNA"/>
</dbReference>
<dbReference type="EMBL" id="AB012247">
    <property type="protein sequence ID" value="BAB02670.1"/>
    <property type="molecule type" value="Genomic_DNA"/>
</dbReference>
<dbReference type="EMBL" id="CP002686">
    <property type="protein sequence ID" value="AEE75766.1"/>
    <property type="molecule type" value="Genomic_DNA"/>
</dbReference>
<dbReference type="EMBL" id="BT003136">
    <property type="protein sequence ID" value="AAO24568.1"/>
    <property type="molecule type" value="mRNA"/>
</dbReference>
<dbReference type="EMBL" id="AK228092">
    <property type="protein sequence ID" value="BAF00051.1"/>
    <property type="molecule type" value="mRNA"/>
</dbReference>
<dbReference type="RefSeq" id="NP_188226.1">
    <property type="nucleotide sequence ID" value="NM_112475.3"/>
</dbReference>
<dbReference type="PDB" id="6HX3">
    <property type="method" value="X-ray"/>
    <property type="resolution" value="2.00 A"/>
    <property type="chains" value="A/C/E/G=1-314"/>
</dbReference>
<dbReference type="PDB" id="6HXG">
    <property type="method" value="X-ray"/>
    <property type="resolution" value="1.90 A"/>
    <property type="chains" value="A/C/E/G=1-314"/>
</dbReference>
<dbReference type="PDB" id="6HYE">
    <property type="method" value="X-ray"/>
    <property type="resolution" value="2.53 A"/>
    <property type="chains" value="A/C/E/G=1-314"/>
</dbReference>
<dbReference type="PDB" id="7LB5">
    <property type="method" value="EM"/>
    <property type="resolution" value="3.16 A"/>
    <property type="chains" value="A/B/C/D/E/F/G/H/I/J/K/L=2-314"/>
</dbReference>
<dbReference type="PDB" id="7LB6">
    <property type="method" value="EM"/>
    <property type="resolution" value="3.16 A"/>
    <property type="chains" value="A/B/C/D/E/F/G/H/I/J/K/L=2-314"/>
</dbReference>
<dbReference type="PDBsum" id="6HX3"/>
<dbReference type="PDBsum" id="6HXG"/>
<dbReference type="PDBsum" id="6HYE"/>
<dbReference type="PDBsum" id="7LB5"/>
<dbReference type="PDBsum" id="7LB6"/>
<dbReference type="SMR" id="Q9ZNR6"/>
<dbReference type="BioGRID" id="6184">
    <property type="interactions" value="5"/>
</dbReference>
<dbReference type="FunCoup" id="Q9ZNR6">
    <property type="interactions" value="302"/>
</dbReference>
<dbReference type="IntAct" id="Q9ZNR6">
    <property type="interactions" value="2"/>
</dbReference>
<dbReference type="STRING" id="3702.Q9ZNR6"/>
<dbReference type="iPTMnet" id="Q9ZNR6"/>
<dbReference type="MetOSite" id="Q9ZNR6"/>
<dbReference type="PaxDb" id="3702-AT3G16050.1"/>
<dbReference type="ProteomicsDB" id="251004"/>
<dbReference type="DNASU" id="820850"/>
<dbReference type="EnsemblPlants" id="AT3G16050.1">
    <property type="protein sequence ID" value="AT3G16050.1"/>
    <property type="gene ID" value="AT3G16050"/>
</dbReference>
<dbReference type="GeneID" id="820850"/>
<dbReference type="Gramene" id="AT3G16050.1">
    <property type="protein sequence ID" value="AT3G16050.1"/>
    <property type="gene ID" value="AT3G16050"/>
</dbReference>
<dbReference type="KEGG" id="ath:AT3G16050"/>
<dbReference type="Araport" id="AT3G16050"/>
<dbReference type="TAIR" id="AT3G16050">
    <property type="gene designation" value="PDX1.2"/>
</dbReference>
<dbReference type="eggNOG" id="KOG1606">
    <property type="taxonomic scope" value="Eukaryota"/>
</dbReference>
<dbReference type="HOGENOM" id="CLU_055352_1_0_1"/>
<dbReference type="InParanoid" id="Q9ZNR6"/>
<dbReference type="OMA" id="FDNCSDP"/>
<dbReference type="PhylomeDB" id="Q9ZNR6"/>
<dbReference type="PRO" id="PR:Q9ZNR6"/>
<dbReference type="Proteomes" id="UP000006548">
    <property type="component" value="Chromosome 3"/>
</dbReference>
<dbReference type="ExpressionAtlas" id="Q9ZNR6">
    <property type="expression patterns" value="baseline and differential"/>
</dbReference>
<dbReference type="GO" id="GO:0005829">
    <property type="term" value="C:cytosol"/>
    <property type="evidence" value="ECO:0000314"/>
    <property type="project" value="TAIR"/>
</dbReference>
<dbReference type="GO" id="GO:0046982">
    <property type="term" value="F:protein heterodimerization activity"/>
    <property type="evidence" value="ECO:0000353"/>
    <property type="project" value="TAIR"/>
</dbReference>
<dbReference type="GO" id="GO:0042823">
    <property type="term" value="P:pyridoxal phosphate biosynthetic process"/>
    <property type="evidence" value="ECO:0007669"/>
    <property type="project" value="InterPro"/>
</dbReference>
<dbReference type="FunFam" id="3.20.20.70:FF:000001">
    <property type="entry name" value="Pyridoxine biosynthesis protein PDX1"/>
    <property type="match status" value="1"/>
</dbReference>
<dbReference type="Gene3D" id="3.20.20.70">
    <property type="entry name" value="Aldolase class I"/>
    <property type="match status" value="1"/>
</dbReference>
<dbReference type="InterPro" id="IPR013785">
    <property type="entry name" value="Aldolase_TIM"/>
</dbReference>
<dbReference type="InterPro" id="IPR001852">
    <property type="entry name" value="PdxS/SNZ"/>
</dbReference>
<dbReference type="InterPro" id="IPR033755">
    <property type="entry name" value="PdxS/SNZ_N"/>
</dbReference>
<dbReference type="InterPro" id="IPR011060">
    <property type="entry name" value="RibuloseP-bd_barrel"/>
</dbReference>
<dbReference type="PANTHER" id="PTHR31829">
    <property type="entry name" value="PYRIDOXAL 5'-PHOSPHATE SYNTHASE SUBUNIT SNZ1-RELATED"/>
    <property type="match status" value="1"/>
</dbReference>
<dbReference type="PANTHER" id="PTHR31829:SF2">
    <property type="entry name" value="PYRIDOXAL 5'-PHOSPHATE SYNTHASE-LIKE SUBUNIT PDX1.2"/>
    <property type="match status" value="1"/>
</dbReference>
<dbReference type="Pfam" id="PF01680">
    <property type="entry name" value="SOR_SNZ"/>
    <property type="match status" value="1"/>
</dbReference>
<dbReference type="PIRSF" id="PIRSF029271">
    <property type="entry name" value="Pdx1"/>
    <property type="match status" value="1"/>
</dbReference>
<dbReference type="SUPFAM" id="SSF51366">
    <property type="entry name" value="Ribulose-phoshate binding barrel"/>
    <property type="match status" value="1"/>
</dbReference>
<dbReference type="PROSITE" id="PS01235">
    <property type="entry name" value="PDXS_SNZ_1"/>
    <property type="match status" value="1"/>
</dbReference>
<dbReference type="PROSITE" id="PS51129">
    <property type="entry name" value="PDXS_SNZ_2"/>
    <property type="match status" value="1"/>
</dbReference>
<keyword id="KW-0002">3D-structure</keyword>
<keyword id="KW-0007">Acetylation</keyword>
<keyword id="KW-0963">Cytoplasm</keyword>
<keyword id="KW-0663">Pyridoxal phosphate</keyword>
<keyword id="KW-1185">Reference proteome</keyword>
<gene>
    <name type="primary">PDX12</name>
    <name type="synonym">A37</name>
    <name type="synonym">PDX1L2</name>
    <name type="ordered locus">At3g16050</name>
    <name type="ORF">MSL1.3</name>
</gene>
<feature type="initiator methionine" description="Removed" evidence="6">
    <location>
        <position position="1"/>
    </location>
</feature>
<feature type="chain" id="PRO_0000109367" description="Pyridoxal 5'-phosphate synthase-like subunit PDX1.2">
    <location>
        <begin position="2"/>
        <end position="314"/>
    </location>
</feature>
<feature type="modified residue" description="N-acetylalanine" evidence="6">
    <location>
        <position position="2"/>
    </location>
</feature>
<feature type="helix" evidence="7">
    <location>
        <begin position="31"/>
        <end position="38"/>
    </location>
</feature>
<feature type="strand" evidence="7">
    <location>
        <begin position="44"/>
        <end position="49"/>
    </location>
</feature>
<feature type="helix" evidence="7">
    <location>
        <begin position="52"/>
        <end position="61"/>
    </location>
</feature>
<feature type="strand" evidence="7">
    <location>
        <begin position="64"/>
        <end position="68"/>
    </location>
</feature>
<feature type="helix" evidence="7">
    <location>
        <begin position="84"/>
        <end position="93"/>
    </location>
</feature>
<feature type="strand" evidence="7">
    <location>
        <begin position="98"/>
        <end position="103"/>
    </location>
</feature>
<feature type="helix" evidence="7">
    <location>
        <begin position="107"/>
        <end position="115"/>
    </location>
</feature>
<feature type="strand" evidence="7">
    <location>
        <begin position="119"/>
        <end position="127"/>
    </location>
</feature>
<feature type="strand" evidence="7">
    <location>
        <begin position="145"/>
        <end position="151"/>
    </location>
</feature>
<feature type="helix" evidence="7">
    <location>
        <begin position="152"/>
        <end position="161"/>
    </location>
</feature>
<feature type="strand" evidence="7">
    <location>
        <begin position="164"/>
        <end position="169"/>
    </location>
</feature>
<feature type="helix" evidence="7">
    <location>
        <begin position="179"/>
        <end position="197"/>
    </location>
</feature>
<feature type="helix" evidence="7">
    <location>
        <begin position="200"/>
        <end position="202"/>
    </location>
</feature>
<feature type="helix" evidence="7">
    <location>
        <begin position="203"/>
        <end position="210"/>
    </location>
</feature>
<feature type="helix" evidence="7">
    <location>
        <begin position="214"/>
        <end position="223"/>
    </location>
</feature>
<feature type="strand" evidence="7">
    <location>
        <begin position="227"/>
        <end position="235"/>
    </location>
</feature>
<feature type="helix" evidence="7">
    <location>
        <begin position="239"/>
        <end position="247"/>
    </location>
</feature>
<feature type="strand" evidence="7">
    <location>
        <begin position="251"/>
        <end position="255"/>
    </location>
</feature>
<feature type="helix" evidence="7">
    <location>
        <begin position="257"/>
        <end position="259"/>
    </location>
</feature>
<feature type="helix" evidence="7">
    <location>
        <begin position="265"/>
        <end position="277"/>
    </location>
</feature>
<feature type="turn" evidence="7">
    <location>
        <begin position="278"/>
        <end position="280"/>
    </location>
</feature>
<feature type="helix" evidence="7">
    <location>
        <begin position="282"/>
        <end position="288"/>
    </location>
</feature>
<name>PDX12_ARATH</name>
<protein>
    <recommendedName>
        <fullName>Pyridoxal 5'-phosphate synthase-like subunit PDX1.2</fullName>
        <shortName>AtPDX1.2</shortName>
        <shortName>AtPDX1;3</shortName>
    </recommendedName>
</protein>
<organism>
    <name type="scientific">Arabidopsis thaliana</name>
    <name type="common">Mouse-ear cress</name>
    <dbReference type="NCBI Taxonomy" id="3702"/>
    <lineage>
        <taxon>Eukaryota</taxon>
        <taxon>Viridiplantae</taxon>
        <taxon>Streptophyta</taxon>
        <taxon>Embryophyta</taxon>
        <taxon>Tracheophyta</taxon>
        <taxon>Spermatophyta</taxon>
        <taxon>Magnoliopsida</taxon>
        <taxon>eudicotyledons</taxon>
        <taxon>Gunneridae</taxon>
        <taxon>Pentapetalae</taxon>
        <taxon>rosids</taxon>
        <taxon>malvids</taxon>
        <taxon>Brassicales</taxon>
        <taxon>Brassicaceae</taxon>
        <taxon>Camelineae</taxon>
        <taxon>Arabidopsis</taxon>
    </lineage>
</organism>
<evidence type="ECO:0000269" key="1">
    <source>
    </source>
</evidence>
<evidence type="ECO:0000269" key="2">
    <source>
    </source>
</evidence>
<evidence type="ECO:0000269" key="3">
    <source>
    </source>
</evidence>
<evidence type="ECO:0000269" key="4">
    <source ref="1"/>
</evidence>
<evidence type="ECO:0000305" key="5"/>
<evidence type="ECO:0007744" key="6">
    <source>
    </source>
</evidence>
<evidence type="ECO:0007829" key="7">
    <source>
        <dbReference type="PDB" id="7LB5"/>
    </source>
</evidence>
<sequence length="314" mass="33836">MADQAMTDQDQGAVTLYSGTAITDAKKNHPFSVKVGLAQVLRGGAIVEVSSVNQAKLAESAGACSVIVSDPVRSRGGVRRMPDPVLIKEVKRAVSVPVMARARVGHFVEAQILESLAVDYIDESEIISVADDDHFINKHNFRSPFICGCRDTGEALRRIREGAAMIRIQGDLTATGNIAETVKNVRSLMGEVRVLNNMDDDEVFTFAKKISAPYDLVAQTKQMGRVPVVQFASGGITTPADAALMMQLGCDGVFVGSEVFDGPDPFKKLRSIVQAVQHYNDPHVLAEMSSGLENAMESLNVRGDRIQDFGQGSV</sequence>
<reference key="1">
    <citation type="journal article" date="1998" name="Plant Sci.">
        <title>T-DNA trapping of a cryptic promoter identifies an ortholog of highly conserved SNZ growth arrest response genes in Arabidopsis.</title>
        <authorList>
            <person name="Oekresz L."/>
            <person name="Mathe C."/>
            <person name="Horvath E."/>
            <person name="Schell J."/>
            <person name="Koncz C."/>
            <person name="Szabados L."/>
        </authorList>
    </citation>
    <scope>NUCLEOTIDE SEQUENCE [MRNA]</scope>
    <scope>TISSUE SPECIFICITY</scope>
    <source>
        <strain>cv. Columbia</strain>
    </source>
</reference>
<reference key="2">
    <citation type="journal article" date="2000" name="DNA Res.">
        <title>Structural analysis of Arabidopsis thaliana chromosome 3. I. Sequence features of the regions of 4,504,864 bp covered by sixty P1 and TAC clones.</title>
        <authorList>
            <person name="Sato S."/>
            <person name="Nakamura Y."/>
            <person name="Kaneko T."/>
            <person name="Katoh T."/>
            <person name="Asamizu E."/>
            <person name="Tabata S."/>
        </authorList>
    </citation>
    <scope>NUCLEOTIDE SEQUENCE [LARGE SCALE GENOMIC DNA]</scope>
    <source>
        <strain>cv. Columbia</strain>
    </source>
</reference>
<reference key="3">
    <citation type="journal article" date="2017" name="Plant J.">
        <title>Araport11: a complete reannotation of the Arabidopsis thaliana reference genome.</title>
        <authorList>
            <person name="Cheng C.Y."/>
            <person name="Krishnakumar V."/>
            <person name="Chan A.P."/>
            <person name="Thibaud-Nissen F."/>
            <person name="Schobel S."/>
            <person name="Town C.D."/>
        </authorList>
    </citation>
    <scope>GENOME REANNOTATION</scope>
    <source>
        <strain>cv. Columbia</strain>
    </source>
</reference>
<reference key="4">
    <citation type="journal article" date="2003" name="Science">
        <title>Empirical analysis of transcriptional activity in the Arabidopsis genome.</title>
        <authorList>
            <person name="Yamada K."/>
            <person name="Lim J."/>
            <person name="Dale J.M."/>
            <person name="Chen H."/>
            <person name="Shinn P."/>
            <person name="Palm C.J."/>
            <person name="Southwick A.M."/>
            <person name="Wu H.C."/>
            <person name="Kim C.J."/>
            <person name="Nguyen M."/>
            <person name="Pham P.K."/>
            <person name="Cheuk R.F."/>
            <person name="Karlin-Newmann G."/>
            <person name="Liu S.X."/>
            <person name="Lam B."/>
            <person name="Sakano H."/>
            <person name="Wu T."/>
            <person name="Yu G."/>
            <person name="Miranda M."/>
            <person name="Quach H.L."/>
            <person name="Tripp M."/>
            <person name="Chang C.H."/>
            <person name="Lee J.M."/>
            <person name="Toriumi M.J."/>
            <person name="Chan M.M."/>
            <person name="Tang C.C."/>
            <person name="Onodera C.S."/>
            <person name="Deng J.M."/>
            <person name="Akiyama K."/>
            <person name="Ansari Y."/>
            <person name="Arakawa T."/>
            <person name="Banh J."/>
            <person name="Banno F."/>
            <person name="Bowser L."/>
            <person name="Brooks S.Y."/>
            <person name="Carninci P."/>
            <person name="Chao Q."/>
            <person name="Choy N."/>
            <person name="Enju A."/>
            <person name="Goldsmith A.D."/>
            <person name="Gurjal M."/>
            <person name="Hansen N.F."/>
            <person name="Hayashizaki Y."/>
            <person name="Johnson-Hopson C."/>
            <person name="Hsuan V.W."/>
            <person name="Iida K."/>
            <person name="Karnes M."/>
            <person name="Khan S."/>
            <person name="Koesema E."/>
            <person name="Ishida J."/>
            <person name="Jiang P.X."/>
            <person name="Jones T."/>
            <person name="Kawai J."/>
            <person name="Kamiya A."/>
            <person name="Meyers C."/>
            <person name="Nakajima M."/>
            <person name="Narusaka M."/>
            <person name="Seki M."/>
            <person name="Sakurai T."/>
            <person name="Satou M."/>
            <person name="Tamse R."/>
            <person name="Vaysberg M."/>
            <person name="Wallender E.K."/>
            <person name="Wong C."/>
            <person name="Yamamura Y."/>
            <person name="Yuan S."/>
            <person name="Shinozaki K."/>
            <person name="Davis R.W."/>
            <person name="Theologis A."/>
            <person name="Ecker J.R."/>
        </authorList>
    </citation>
    <scope>NUCLEOTIDE SEQUENCE [LARGE SCALE MRNA]</scope>
    <source>
        <strain>cv. Columbia</strain>
    </source>
</reference>
<reference key="5">
    <citation type="submission" date="2006-07" db="EMBL/GenBank/DDBJ databases">
        <title>Large-scale analysis of RIKEN Arabidopsis full-length (RAFL) cDNAs.</title>
        <authorList>
            <person name="Totoki Y."/>
            <person name="Seki M."/>
            <person name="Ishida J."/>
            <person name="Nakajima M."/>
            <person name="Enju A."/>
            <person name="Kamiya A."/>
            <person name="Narusaka M."/>
            <person name="Shin-i T."/>
            <person name="Nakagawa M."/>
            <person name="Sakamoto N."/>
            <person name="Oishi K."/>
            <person name="Kohara Y."/>
            <person name="Kobayashi M."/>
            <person name="Toyoda A."/>
            <person name="Sakaki Y."/>
            <person name="Sakurai T."/>
            <person name="Iida K."/>
            <person name="Akiyama K."/>
            <person name="Satou M."/>
            <person name="Toyoda T."/>
            <person name="Konagaya A."/>
            <person name="Carninci P."/>
            <person name="Kawai J."/>
            <person name="Hayashizaki Y."/>
            <person name="Shinozaki K."/>
        </authorList>
    </citation>
    <scope>NUCLEOTIDE SEQUENCE [LARGE SCALE MRNA]</scope>
    <source>
        <strain>cv. Columbia</strain>
    </source>
</reference>
<reference key="6">
    <citation type="journal article" date="2005" name="Proc. Natl. Acad. Sci. U.S.A.">
        <title>Vitamin B6 biosynthesis in higher plants.</title>
        <authorList>
            <person name="Tambasco-Studart M."/>
            <person name="Titiz O."/>
            <person name="Raschle T."/>
            <person name="Forster G."/>
            <person name="Amrhein N."/>
            <person name="Fitzpatrick T.B."/>
        </authorList>
    </citation>
    <scope>SUBCELLULAR LOCATION</scope>
</reference>
<reference key="7">
    <citation type="journal article" date="2006" name="Plant Cell">
        <title>Analysis of the Arabidopsis rsr4-1/pdx1-3 mutant reveals the critical function of the PDX1 protein family in metabolism, development, and vitamin B6 biosynthesis.</title>
        <authorList>
            <person name="Wagner S."/>
            <person name="Bernhardt A."/>
            <person name="Leuendorf J.E."/>
            <person name="Drewke C."/>
            <person name="Lytovchenko A."/>
            <person name="Mujahed N."/>
            <person name="Gurgui C."/>
            <person name="Frommer W.B."/>
            <person name="Leistner E."/>
            <person name="Fernie A.R."/>
            <person name="Hellmann H."/>
        </authorList>
    </citation>
    <scope>TISSUE SPECIFICITY</scope>
    <scope>INTERACTION WITH PDX1.1 AND PDX1.3</scope>
    <source>
        <strain>cv. C24</strain>
    </source>
</reference>
<reference key="8">
    <citation type="journal article" date="2007" name="Plant Physiol.">
        <title>Functional analysis of PDX2 from Arabidopsis, a glutaminase involved in vitamin B6 biosynthesis.</title>
        <authorList>
            <person name="Tambasco-Studart M."/>
            <person name="Tews I."/>
            <person name="Amrhein N."/>
            <person name="Fitzpatrick T.B."/>
        </authorList>
    </citation>
    <scope>FUNCTION</scope>
</reference>
<reference key="9">
    <citation type="journal article" date="2012" name="Mol. Cell. Proteomics">
        <title>Comparative large-scale characterisation of plant vs. mammal proteins reveals similar and idiosyncratic N-alpha acetylation features.</title>
        <authorList>
            <person name="Bienvenut W.V."/>
            <person name="Sumpton D."/>
            <person name="Martinez A."/>
            <person name="Lilla S."/>
            <person name="Espagne C."/>
            <person name="Meinnel T."/>
            <person name="Giglione C."/>
        </authorList>
    </citation>
    <scope>ACETYLATION [LARGE SCALE ANALYSIS] AT ALA-2</scope>
    <scope>CLEAVAGE OF INITIATOR METHIONINE [LARGE SCALE ANALYSIS]</scope>
    <scope>IDENTIFICATION BY MASS SPECTROMETRY [LARGE SCALE ANALYSIS]</scope>
</reference>
<proteinExistence type="evidence at protein level"/>
<accession>Q9ZNR6</accession>
<accession>Q0WS48</accession>
<comment type="function">
    <text evidence="3">The protein has no function in the formation of pyridoxal 5'-phosphate.</text>
</comment>
<comment type="subunit">
    <text>Homodimer or heterodimer with PDX1.1 or PDX1.3. No interaction with PDX2.</text>
</comment>
<comment type="interaction">
    <interactant intactId="EBI-1545987">
        <id>Q9ZNR6</id>
    </interactant>
    <interactant intactId="EBI-1545956">
        <id>Q8L940</id>
        <label>PDX13</label>
    </interactant>
    <organismsDiffer>false</organismsDiffer>
    <experiments>5</experiments>
</comment>
<comment type="subcellular location">
    <subcellularLocation>
        <location evidence="1">Cytoplasm</location>
    </subcellularLocation>
</comment>
<comment type="tissue specificity">
    <text evidence="2 4">Expressed in callus tissues, flowers and roots. Weakly expressed in leaves and stems.</text>
</comment>
<comment type="miscellaneous">
    <text>Unlike PDX1.1 or PDX1.3, PDX1.2 is unable to interact with PDX2 and restore prototrophy in yeast snz1 mutants.</text>
</comment>
<comment type="similarity">
    <text evidence="5">Belongs to the PdxS/SNZ family.</text>
</comment>